<comment type="function">
    <text evidence="1">Core component of nucleosome. Nucleosomes wrap and compact DNA into chromatin, limiting DNA accessibility to the cellular machineries which require DNA as a template. Histones thereby play a central role in transcription regulation, DNA repair, DNA replication and chromosomal stability. DNA accessibility is regulated via a complex set of post-translational modifications of histones, also called histone code, and nucleosome remodeling (By similarity).</text>
</comment>
<comment type="subunit">
    <text evidence="1">The nucleosome is a histone octamer containing two molecules each of H2A, H2B, H3 and H4 assembled in one H3-H4 heterotetramer and two H2A-H2B heterodimers. The octamer wraps approximately 147 bp of DNA (By similarity).</text>
</comment>
<comment type="subcellular location">
    <subcellularLocation>
        <location evidence="1">Nucleus</location>
    </subcellularLocation>
    <subcellularLocation>
        <location evidence="1">Chromosome</location>
    </subcellularLocation>
</comment>
<comment type="PTM">
    <text evidence="1">Phosphorylated to form H3S10ph. H3S10ph promotes subsequent H3K14ac formation and is required for transcriptional activation through TBP recruitment to the promoters (By similarity).</text>
</comment>
<comment type="PTM">
    <text evidence="1">Mono-, di- and trimethylated by the COMPASS complex to form H3K4me1/2/3. H3K4me activates gene expression by regulating transcription elongation and plays a role in telomere length maintenance. H3K4me enrichment correlates with transcription levels, and occurs in a 5' to 3' gradient with H3K4me3 enrichment at the 5'-end of genes, shifting to H3K4me2 and then H3K4me1. Methylated by SET2 to form H3K36me. H3K36me represses gene expression. Methylated by DOT1 to form H3K79me. H3K79me is required for association of SIR proteins with telomeric regions and for telomeric silencing. The COMPASS-mediated formation of H3K4me2/3 and the DOT1-mediated formation of H3K79me require H2BK123ub1 (By similarity).</text>
</comment>
<comment type="PTM">
    <text evidence="1">Acetylation of histone H3 leads to transcriptional activation. H3K14ac formation by GCN5 is promoted by H3S10ph. H3K14ac can also be formed by ESA1. H3K56ac formation occurs predominantly in newly synthesized H3 molecules during G1, S and G2/M of the cell cycle and may be involved in DNA repair (By similarity).</text>
</comment>
<comment type="similarity">
    <text evidence="3">Belongs to the histone H3 family.</text>
</comment>
<comment type="caution">
    <text evidence="3">To ensure consistency between histone entries, we follow the 'Brno' nomenclature for histone modifications, with positions referring to those used in the literature for the 'closest' model organism. Due to slight variations in histone sequences between organisms and to the presence of initiator methionine in UniProtKB/Swiss-Prot sequences, the actual positions of modified amino acids in the sequence generally differ. In this entry the following conventions are used: H3K4me1/2/3 = mono-, di- and trimethylated Lys-5; H3K9ac = acetylated Lys-10; H3K9me1 = monomethylated Lys-10; H3S10ph = phosphorylated Ser-11; H3K14ac = acetylated Lys-15; H3K14me2 = dimethylated Lys-15; H3K18ac = acetylated Lys-19; H3K18me1 = monomethylated Lys-19; H3K23ac = acetylated Lys-24; H3K23me1 = monomethylated Lys-24; H3K27ac = acetylated Lys-28; H3K27me1/2/3 = mono-, di- and trimethylated Lys-28; H3K36ac = acetylated Lys-39; H3K36me1/2/3 = mono-, di- and trimethylated Lys-39; H3K56ac = acetylated Lys-59; H3K64ac = acetylated Lys-67; H3K79me1/2/3 = mono-, di- and trimethylated Lys-82.</text>
</comment>
<dbReference type="EMBL" id="AAEY01000049">
    <property type="protein sequence ID" value="EAL18450.1"/>
    <property type="molecule type" value="Genomic_DNA"/>
</dbReference>
<dbReference type="RefSeq" id="XP_773097.1">
    <property type="nucleotide sequence ID" value="XM_768004.1"/>
</dbReference>
<dbReference type="SMR" id="P0CO05"/>
<dbReference type="EnsemblFungi" id="AAW46028">
    <property type="protein sequence ID" value="AAW46028"/>
    <property type="gene ID" value="CNJ02540"/>
</dbReference>
<dbReference type="GeneID" id="4938432"/>
<dbReference type="KEGG" id="cnb:CNBJ0920"/>
<dbReference type="VEuPathDB" id="FungiDB:CNBJ0920"/>
<dbReference type="HOGENOM" id="CLU_078295_4_0_1"/>
<dbReference type="GO" id="GO:0000786">
    <property type="term" value="C:nucleosome"/>
    <property type="evidence" value="ECO:0007669"/>
    <property type="project" value="UniProtKB-KW"/>
</dbReference>
<dbReference type="GO" id="GO:0005634">
    <property type="term" value="C:nucleus"/>
    <property type="evidence" value="ECO:0007669"/>
    <property type="project" value="UniProtKB-SubCell"/>
</dbReference>
<dbReference type="GO" id="GO:0003677">
    <property type="term" value="F:DNA binding"/>
    <property type="evidence" value="ECO:0007669"/>
    <property type="project" value="UniProtKB-KW"/>
</dbReference>
<dbReference type="GO" id="GO:0046982">
    <property type="term" value="F:protein heterodimerization activity"/>
    <property type="evidence" value="ECO:0007669"/>
    <property type="project" value="InterPro"/>
</dbReference>
<dbReference type="GO" id="GO:0030527">
    <property type="term" value="F:structural constituent of chromatin"/>
    <property type="evidence" value="ECO:0007669"/>
    <property type="project" value="InterPro"/>
</dbReference>
<dbReference type="CDD" id="cd22911">
    <property type="entry name" value="HFD_H3"/>
    <property type="match status" value="1"/>
</dbReference>
<dbReference type="FunFam" id="1.10.20.10:FF:000001">
    <property type="entry name" value="Histone H3"/>
    <property type="match status" value="1"/>
</dbReference>
<dbReference type="Gene3D" id="1.10.20.10">
    <property type="entry name" value="Histone, subunit A"/>
    <property type="match status" value="1"/>
</dbReference>
<dbReference type="InterPro" id="IPR009072">
    <property type="entry name" value="Histone-fold"/>
</dbReference>
<dbReference type="InterPro" id="IPR007125">
    <property type="entry name" value="Histone_H2A/H2B/H3"/>
</dbReference>
<dbReference type="InterPro" id="IPR000164">
    <property type="entry name" value="Histone_H3/CENP-A"/>
</dbReference>
<dbReference type="PANTHER" id="PTHR11426">
    <property type="entry name" value="HISTONE H3"/>
    <property type="match status" value="1"/>
</dbReference>
<dbReference type="Pfam" id="PF00125">
    <property type="entry name" value="Histone"/>
    <property type="match status" value="1"/>
</dbReference>
<dbReference type="PRINTS" id="PR00622">
    <property type="entry name" value="HISTONEH3"/>
</dbReference>
<dbReference type="SMART" id="SM00428">
    <property type="entry name" value="H3"/>
    <property type="match status" value="1"/>
</dbReference>
<dbReference type="SUPFAM" id="SSF47113">
    <property type="entry name" value="Histone-fold"/>
    <property type="match status" value="1"/>
</dbReference>
<dbReference type="PROSITE" id="PS00322">
    <property type="entry name" value="HISTONE_H3_1"/>
    <property type="match status" value="1"/>
</dbReference>
<dbReference type="PROSITE" id="PS00959">
    <property type="entry name" value="HISTONE_H3_2"/>
    <property type="match status" value="1"/>
</dbReference>
<name>H3_CRYNB</name>
<feature type="initiator methionine" description="Removed" evidence="1">
    <location>
        <position position="1"/>
    </location>
</feature>
<feature type="chain" id="PRO_0000410107" description="Histone H3">
    <location>
        <begin position="2"/>
        <end position="138"/>
    </location>
</feature>
<feature type="region of interest" description="Disordered" evidence="2">
    <location>
        <begin position="1"/>
        <end position="49"/>
    </location>
</feature>
<feature type="modified residue" description="N6,N6,N6-trimethyllysine; alternate" evidence="1">
    <location>
        <position position="5"/>
    </location>
</feature>
<feature type="modified residue" description="N6,N6-dimethyllysine; alternate" evidence="1">
    <location>
        <position position="5"/>
    </location>
</feature>
<feature type="modified residue" description="N6-methyllysine; alternate" evidence="1">
    <location>
        <position position="5"/>
    </location>
</feature>
<feature type="modified residue" description="N6-acetyllysine; alternate" evidence="1">
    <location>
        <position position="10"/>
    </location>
</feature>
<feature type="modified residue" description="N6-methyllysine; alternate" evidence="1">
    <location>
        <position position="10"/>
    </location>
</feature>
<feature type="modified residue" description="Phosphoserine" evidence="1">
    <location>
        <position position="11"/>
    </location>
</feature>
<feature type="modified residue" description="N6,N6-dimethyllysine; alternate" evidence="1">
    <location>
        <position position="15"/>
    </location>
</feature>
<feature type="modified residue" description="N6-acetyllysine; alternate" evidence="1">
    <location>
        <position position="15"/>
    </location>
</feature>
<feature type="modified residue" description="N6-methyllysine; alternate" evidence="1">
    <location>
        <position position="15"/>
    </location>
</feature>
<feature type="modified residue" description="N6-acetyllysine; alternate" evidence="1">
    <location>
        <position position="19"/>
    </location>
</feature>
<feature type="modified residue" description="N6-methyllysine; alternate" evidence="1">
    <location>
        <position position="19"/>
    </location>
</feature>
<feature type="modified residue" description="N6-acetyllysine; alternate" evidence="1">
    <location>
        <position position="24"/>
    </location>
</feature>
<feature type="modified residue" description="N6-methyllysine; alternate" evidence="1">
    <location>
        <position position="24"/>
    </location>
</feature>
<feature type="modified residue" description="N6,N6,N6-trimethyllysine; alternate" evidence="1">
    <location>
        <position position="28"/>
    </location>
</feature>
<feature type="modified residue" description="N6,N6-dimethyllysine; alternate" evidence="1">
    <location>
        <position position="28"/>
    </location>
</feature>
<feature type="modified residue" description="N6-acetyllysine; alternate" evidence="1">
    <location>
        <position position="28"/>
    </location>
</feature>
<feature type="modified residue" description="N6-methyllysine; alternate" evidence="1">
    <location>
        <position position="28"/>
    </location>
</feature>
<feature type="modified residue" description="N6,N6,N6-trimethyllysine; alternate" evidence="1">
    <location>
        <position position="39"/>
    </location>
</feature>
<feature type="modified residue" description="N6,N6-dimethyllysine; alternate" evidence="1">
    <location>
        <position position="39"/>
    </location>
</feature>
<feature type="modified residue" description="N6-acetyllysine; alternate" evidence="1">
    <location>
        <position position="39"/>
    </location>
</feature>
<feature type="modified residue" description="N6-methyllysine; alternate" evidence="1">
    <location>
        <position position="39"/>
    </location>
</feature>
<feature type="modified residue" description="N6-acetyllysine" evidence="1">
    <location>
        <position position="59"/>
    </location>
</feature>
<feature type="modified residue" description="N6-acetyllysine" evidence="1">
    <location>
        <position position="67"/>
    </location>
</feature>
<feature type="modified residue" description="N6,N6,N6-trimethyllysine; alternate" evidence="1">
    <location>
        <position position="82"/>
    </location>
</feature>
<feature type="modified residue" description="N6,N6-dimethyllysine; alternate" evidence="1">
    <location>
        <position position="82"/>
    </location>
</feature>
<feature type="modified residue" description="N6-methyllysine; alternate" evidence="1">
    <location>
        <position position="82"/>
    </location>
</feature>
<proteinExistence type="inferred from homology"/>
<organism>
    <name type="scientific">Cryptococcus neoformans var. neoformans serotype D (strain B-3501A)</name>
    <name type="common">Filobasidiella neoformans</name>
    <dbReference type="NCBI Taxonomy" id="283643"/>
    <lineage>
        <taxon>Eukaryota</taxon>
        <taxon>Fungi</taxon>
        <taxon>Dikarya</taxon>
        <taxon>Basidiomycota</taxon>
        <taxon>Agaricomycotina</taxon>
        <taxon>Tremellomycetes</taxon>
        <taxon>Tremellales</taxon>
        <taxon>Cryptococcaceae</taxon>
        <taxon>Cryptococcus</taxon>
        <taxon>Cryptococcus neoformans species complex</taxon>
    </lineage>
</organism>
<protein>
    <recommendedName>
        <fullName>Histone H3</fullName>
    </recommendedName>
</protein>
<reference key="1">
    <citation type="journal article" date="2005" name="Science">
        <title>The genome of the basidiomycetous yeast and human pathogen Cryptococcus neoformans.</title>
        <authorList>
            <person name="Loftus B.J."/>
            <person name="Fung E."/>
            <person name="Roncaglia P."/>
            <person name="Rowley D."/>
            <person name="Amedeo P."/>
            <person name="Bruno D."/>
            <person name="Vamathevan J."/>
            <person name="Miranda M."/>
            <person name="Anderson I.J."/>
            <person name="Fraser J.A."/>
            <person name="Allen J.E."/>
            <person name="Bosdet I.E."/>
            <person name="Brent M.R."/>
            <person name="Chiu R."/>
            <person name="Doering T.L."/>
            <person name="Donlin M.J."/>
            <person name="D'Souza C.A."/>
            <person name="Fox D.S."/>
            <person name="Grinberg V."/>
            <person name="Fu J."/>
            <person name="Fukushima M."/>
            <person name="Haas B.J."/>
            <person name="Huang J.C."/>
            <person name="Janbon G."/>
            <person name="Jones S.J.M."/>
            <person name="Koo H.L."/>
            <person name="Krzywinski M.I."/>
            <person name="Kwon-Chung K.J."/>
            <person name="Lengeler K.B."/>
            <person name="Maiti R."/>
            <person name="Marra M.A."/>
            <person name="Marra R.E."/>
            <person name="Mathewson C.A."/>
            <person name="Mitchell T.G."/>
            <person name="Pertea M."/>
            <person name="Riggs F.R."/>
            <person name="Salzberg S.L."/>
            <person name="Schein J.E."/>
            <person name="Shvartsbeyn A."/>
            <person name="Shin H."/>
            <person name="Shumway M."/>
            <person name="Specht C.A."/>
            <person name="Suh B.B."/>
            <person name="Tenney A."/>
            <person name="Utterback T.R."/>
            <person name="Wickes B.L."/>
            <person name="Wortman J.R."/>
            <person name="Wye N.H."/>
            <person name="Kronstad J.W."/>
            <person name="Lodge J.K."/>
            <person name="Heitman J."/>
            <person name="Davis R.W."/>
            <person name="Fraser C.M."/>
            <person name="Hyman R.W."/>
        </authorList>
    </citation>
    <scope>NUCLEOTIDE SEQUENCE [LARGE SCALE GENOMIC DNA]</scope>
    <source>
        <strain>B-3501A</strain>
    </source>
</reference>
<keyword id="KW-0007">Acetylation</keyword>
<keyword id="KW-0158">Chromosome</keyword>
<keyword id="KW-0238">DNA-binding</keyword>
<keyword id="KW-0488">Methylation</keyword>
<keyword id="KW-0544">Nucleosome core</keyword>
<keyword id="KW-0539">Nucleus</keyword>
<keyword id="KW-0597">Phosphoprotein</keyword>
<gene>
    <name type="primary">HHT1</name>
    <name type="ordered locus">CNBJ0920</name>
</gene>
<accession>P0CO05</accession>
<accession>Q55L92</accession>
<accession>Q5KA91</accession>
<sequence>MARTKQTARKSTGGKAPRKQLATKAARKQAPSQVSGGVKKPHRYRPGTVALREIRRYQKSTELLIRKLPFQRLVREIAQDFKTDLRFQSSAIGALQEASEAYLVSLFEDTNLAAIHAKRVTIQPKDLQLARRLRGERS</sequence>
<evidence type="ECO:0000250" key="1"/>
<evidence type="ECO:0000256" key="2">
    <source>
        <dbReference type="SAM" id="MobiDB-lite"/>
    </source>
</evidence>
<evidence type="ECO:0000305" key="3"/>